<gene>
    <name type="ordered locus">ECU05_1610</name>
</gene>
<gene>
    <name type="ordered locus">ECU11_0120</name>
</gene>
<comment type="similarity">
    <text evidence="1">Belongs to the UPF0328 family.</text>
</comment>
<proteinExistence type="inferred from homology"/>
<organism>
    <name type="scientific">Encephalitozoon cuniculi (strain GB-M1)</name>
    <name type="common">Microsporidian parasite</name>
    <dbReference type="NCBI Taxonomy" id="284813"/>
    <lineage>
        <taxon>Eukaryota</taxon>
        <taxon>Fungi</taxon>
        <taxon>Fungi incertae sedis</taxon>
        <taxon>Microsporidia</taxon>
        <taxon>Unikaryonidae</taxon>
        <taxon>Encephalitozoon</taxon>
    </lineage>
</organism>
<sequence length="266" mass="29968">MDTILGILNVQKLHTTSKHQENKDKPPETRRRGTINSILLAMSTVFPVFVFFTHREDGFDGNILLRFTTLVFPFSYSAAQHFLLLSSNWGSSCRSSSGLYRALCLALNALLAVFFVISICSLILFTADEWDDNEALTICSMLFPSLLLSSTCLLSISCNFATFQFVDSGPDIPIDLLIFLCLVILHKTSPLEDYEYLPYFAIPSFILVLVRSFKERLLPRKSSPPAAAWRVAVFLLILVLTISVYVFISRVCWAVIESKWEALTSD</sequence>
<protein>
    <recommendedName>
        <fullName>UPF0328 protein ECU05_1610/ECU11_0120</fullName>
    </recommendedName>
</protein>
<feature type="chain" id="PRO_0000223125" description="UPF0328 protein ECU05_1610/ECU11_0120">
    <location>
        <begin position="1"/>
        <end position="266"/>
    </location>
</feature>
<evidence type="ECO:0000305" key="1"/>
<keyword id="KW-1185">Reference proteome</keyword>
<reference key="1">
    <citation type="journal article" date="2001" name="Nature">
        <title>Genome sequence and gene compaction of the eukaryote parasite Encephalitozoon cuniculi.</title>
        <authorList>
            <person name="Katinka M.D."/>
            <person name="Duprat S."/>
            <person name="Cornillot E."/>
            <person name="Metenier G."/>
            <person name="Thomarat F."/>
            <person name="Prensier G."/>
            <person name="Barbe V."/>
            <person name="Peyretaillade E."/>
            <person name="Brottier P."/>
            <person name="Wincker P."/>
            <person name="Delbac F."/>
            <person name="El Alaoui H."/>
            <person name="Peyret P."/>
            <person name="Saurin W."/>
            <person name="Gouy M."/>
            <person name="Weissenbach J."/>
            <person name="Vivares C.P."/>
        </authorList>
    </citation>
    <scope>NUCLEOTIDE SEQUENCE [LARGE SCALE GENOMIC DNA]</scope>
    <source>
        <strain>GB-M1</strain>
    </source>
</reference>
<dbReference type="EMBL" id="AL590445">
    <property type="protein sequence ID" value="CAD26681.1"/>
    <property type="molecule type" value="Genomic_DNA"/>
</dbReference>
<dbReference type="EMBL" id="AL590450">
    <property type="protein sequence ID" value="CAD25922.1"/>
    <property type="molecule type" value="Genomic_DNA"/>
</dbReference>
<dbReference type="RefSeq" id="NP_586318.1">
    <property type="nucleotide sequence ID" value="NM_001042151.1"/>
</dbReference>
<dbReference type="RefSeq" id="NP_597504.1">
    <property type="nucleotide sequence ID" value="NM_001041370.1"/>
</dbReference>
<dbReference type="GeneID" id="859171"/>
<dbReference type="GeneID" id="859969"/>
<dbReference type="KEGG" id="ecu:ECU05_1610"/>
<dbReference type="KEGG" id="ecu:ECU11_0120"/>
<dbReference type="VEuPathDB" id="MicrosporidiaDB:ECU05_1610"/>
<dbReference type="VEuPathDB" id="MicrosporidiaDB:ECU11_0120"/>
<dbReference type="HOGENOM" id="CLU_059413_0_0_1"/>
<dbReference type="InParanoid" id="Q8ST42"/>
<dbReference type="OrthoDB" id="2201194at2759"/>
<dbReference type="Proteomes" id="UP000000819">
    <property type="component" value="Chromosome V"/>
</dbReference>
<dbReference type="Proteomes" id="UP000000819">
    <property type="component" value="Chromosome XI"/>
</dbReference>
<dbReference type="InterPro" id="IPR019081">
    <property type="entry name" value="UPF0328"/>
</dbReference>
<dbReference type="Pfam" id="PF09591">
    <property type="entry name" value="DUF2463"/>
    <property type="match status" value="1"/>
</dbReference>
<name>Y5G1_ENCCU</name>
<accession>Q8ST42</accession>